<sequence length="338" mass="37766">MSTLRLLLSDSYDPWFNLAVEECIFRQMPATQRVLFLWRNADTVVIGRAQNPWKECNTRRMEEDHVRLARRSSGGGAVFHDLGNTCFTFMAGKPEYDKTVSTAIVLAALNSLGVTAEASGRNDLVVKTDSGDRKVSGSAYRETIDRGFHHGTLLLNADLSRLANYLNPDQKKLQAKGITSVRGRVANLVELLPGITHQHICEAIQEAFFSHYGERVDAEVISPDNTPDLPNFAETFARQSSWEWNFGQAPAFSHLLDERFRWGGVELHFDVEKGHITRTQAFTDSLNPAPLEALAARLVGCQYRAEVLLQQCEALVGDFPEQEAELKELSAWMAGAVR</sequence>
<organism>
    <name type="scientific">Klebsiella pneumoniae (strain 342)</name>
    <dbReference type="NCBI Taxonomy" id="507522"/>
    <lineage>
        <taxon>Bacteria</taxon>
        <taxon>Pseudomonadati</taxon>
        <taxon>Pseudomonadota</taxon>
        <taxon>Gammaproteobacteria</taxon>
        <taxon>Enterobacterales</taxon>
        <taxon>Enterobacteriaceae</taxon>
        <taxon>Klebsiella/Raoultella group</taxon>
        <taxon>Klebsiella</taxon>
        <taxon>Klebsiella pneumoniae complex</taxon>
    </lineage>
</organism>
<reference key="1">
    <citation type="journal article" date="2008" name="PLoS Genet.">
        <title>Complete genome sequence of the N2-fixing broad host range endophyte Klebsiella pneumoniae 342 and virulence predictions verified in mice.</title>
        <authorList>
            <person name="Fouts D.E."/>
            <person name="Tyler H.L."/>
            <person name="DeBoy R.T."/>
            <person name="Daugherty S."/>
            <person name="Ren Q."/>
            <person name="Badger J.H."/>
            <person name="Durkin A.S."/>
            <person name="Huot H."/>
            <person name="Shrivastava S."/>
            <person name="Kothari S."/>
            <person name="Dodson R.J."/>
            <person name="Mohamoud Y."/>
            <person name="Khouri H."/>
            <person name="Roesch L.F.W."/>
            <person name="Krogfelt K.A."/>
            <person name="Struve C."/>
            <person name="Triplett E.W."/>
            <person name="Methe B.A."/>
        </authorList>
    </citation>
    <scope>NUCLEOTIDE SEQUENCE [LARGE SCALE GENOMIC DNA]</scope>
    <source>
        <strain>342</strain>
    </source>
</reference>
<evidence type="ECO:0000255" key="1">
    <source>
        <dbReference type="HAMAP-Rule" id="MF_01602"/>
    </source>
</evidence>
<evidence type="ECO:0000255" key="2">
    <source>
        <dbReference type="PROSITE-ProRule" id="PRU01067"/>
    </source>
</evidence>
<name>LPLA_KLEP3</name>
<comment type="function">
    <text evidence="1">Catalyzes both the ATP-dependent activation of exogenously supplied lipoate to lipoyl-AMP and the transfer of the activated lipoyl onto the lipoyl domains of lipoate-dependent enzymes.</text>
</comment>
<comment type="catalytic activity">
    <reaction evidence="1">
        <text>L-lysyl-[lipoyl-carrier protein] + (R)-lipoate + ATP = N(6)-[(R)-lipoyl]-L-lysyl-[lipoyl-carrier protein] + AMP + diphosphate + H(+)</text>
        <dbReference type="Rhea" id="RHEA:49288"/>
        <dbReference type="Rhea" id="RHEA-COMP:10500"/>
        <dbReference type="Rhea" id="RHEA-COMP:10502"/>
        <dbReference type="ChEBI" id="CHEBI:15378"/>
        <dbReference type="ChEBI" id="CHEBI:29969"/>
        <dbReference type="ChEBI" id="CHEBI:30616"/>
        <dbReference type="ChEBI" id="CHEBI:33019"/>
        <dbReference type="ChEBI" id="CHEBI:83088"/>
        <dbReference type="ChEBI" id="CHEBI:83099"/>
        <dbReference type="ChEBI" id="CHEBI:456215"/>
        <dbReference type="EC" id="6.3.1.20"/>
    </reaction>
</comment>
<comment type="pathway">
    <text evidence="1">Protein modification; protein lipoylation via exogenous pathway; protein N(6)-(lipoyl)lysine from lipoate: step 1/2.</text>
</comment>
<comment type="pathway">
    <text evidence="1">Protein modification; protein lipoylation via exogenous pathway; protein N(6)-(lipoyl)lysine from lipoate: step 2/2.</text>
</comment>
<comment type="subunit">
    <text evidence="1">Monomer.</text>
</comment>
<comment type="subcellular location">
    <subcellularLocation>
        <location evidence="1">Cytoplasm</location>
    </subcellularLocation>
</comment>
<comment type="miscellaneous">
    <text evidence="1">In the transfer reaction, the free carboxyl group of lipoic acid is attached via an amide linkage to the epsilon-amino group of a specific lysine residue of lipoyl domains of lipoate-dependent enzymes.</text>
</comment>
<comment type="similarity">
    <text evidence="1">Belongs to the LplA family.</text>
</comment>
<gene>
    <name evidence="1" type="primary">lplA</name>
    <name type="ordered locus">KPK_4773</name>
</gene>
<accession>B5Y273</accession>
<feature type="chain" id="PRO_1000148109" description="Lipoate-protein ligase A">
    <location>
        <begin position="1"/>
        <end position="338"/>
    </location>
</feature>
<feature type="domain" description="BPL/LPL catalytic" evidence="2">
    <location>
        <begin position="29"/>
        <end position="216"/>
    </location>
</feature>
<feature type="binding site" evidence="1">
    <location>
        <position position="71"/>
    </location>
    <ligand>
        <name>ATP</name>
        <dbReference type="ChEBI" id="CHEBI:30616"/>
    </ligand>
</feature>
<feature type="binding site" evidence="1">
    <location>
        <begin position="76"/>
        <end position="79"/>
    </location>
    <ligand>
        <name>ATP</name>
        <dbReference type="ChEBI" id="CHEBI:30616"/>
    </ligand>
</feature>
<feature type="binding site" evidence="1">
    <location>
        <position position="134"/>
    </location>
    <ligand>
        <name>(R)-lipoate</name>
        <dbReference type="ChEBI" id="CHEBI:83088"/>
    </ligand>
</feature>
<feature type="binding site" evidence="1">
    <location>
        <position position="134"/>
    </location>
    <ligand>
        <name>ATP</name>
        <dbReference type="ChEBI" id="CHEBI:30616"/>
    </ligand>
</feature>
<proteinExistence type="inferred from homology"/>
<protein>
    <recommendedName>
        <fullName evidence="1">Lipoate-protein ligase A</fullName>
        <ecNumber evidence="1">6.3.1.20</ecNumber>
    </recommendedName>
    <alternativeName>
        <fullName evidence="1">Lipoate--protein ligase</fullName>
    </alternativeName>
</protein>
<keyword id="KW-0067">ATP-binding</keyword>
<keyword id="KW-0963">Cytoplasm</keyword>
<keyword id="KW-0436">Ligase</keyword>
<keyword id="KW-0547">Nucleotide-binding</keyword>
<dbReference type="EC" id="6.3.1.20" evidence="1"/>
<dbReference type="EMBL" id="CP000964">
    <property type="protein sequence ID" value="ACI09206.1"/>
    <property type="molecule type" value="Genomic_DNA"/>
</dbReference>
<dbReference type="SMR" id="B5Y273"/>
<dbReference type="KEGG" id="kpe:KPK_4773"/>
<dbReference type="HOGENOM" id="CLU_022986_0_1_6"/>
<dbReference type="UniPathway" id="UPA00537">
    <property type="reaction ID" value="UER00594"/>
</dbReference>
<dbReference type="UniPathway" id="UPA00537">
    <property type="reaction ID" value="UER00595"/>
</dbReference>
<dbReference type="Proteomes" id="UP000001734">
    <property type="component" value="Chromosome"/>
</dbReference>
<dbReference type="GO" id="GO:0005829">
    <property type="term" value="C:cytosol"/>
    <property type="evidence" value="ECO:0007669"/>
    <property type="project" value="TreeGrafter"/>
</dbReference>
<dbReference type="GO" id="GO:0005524">
    <property type="term" value="F:ATP binding"/>
    <property type="evidence" value="ECO:0007669"/>
    <property type="project" value="UniProtKB-KW"/>
</dbReference>
<dbReference type="GO" id="GO:0016979">
    <property type="term" value="F:lipoate-protein ligase activity"/>
    <property type="evidence" value="ECO:0007669"/>
    <property type="project" value="UniProtKB-UniRule"/>
</dbReference>
<dbReference type="GO" id="GO:0017118">
    <property type="term" value="F:lipoyltransferase activity"/>
    <property type="evidence" value="ECO:0007669"/>
    <property type="project" value="TreeGrafter"/>
</dbReference>
<dbReference type="GO" id="GO:0036211">
    <property type="term" value="P:protein modification process"/>
    <property type="evidence" value="ECO:0007669"/>
    <property type="project" value="InterPro"/>
</dbReference>
<dbReference type="CDD" id="cd16443">
    <property type="entry name" value="LplA"/>
    <property type="match status" value="1"/>
</dbReference>
<dbReference type="FunFam" id="3.30.930.10:FF:000024">
    <property type="entry name" value="Lipoate-protein ligase A"/>
    <property type="match status" value="1"/>
</dbReference>
<dbReference type="Gene3D" id="3.30.930.10">
    <property type="entry name" value="Bira Bifunctional Protein, Domain 2"/>
    <property type="match status" value="1"/>
</dbReference>
<dbReference type="Gene3D" id="3.30.390.50">
    <property type="entry name" value="CO dehydrogenase flavoprotein, C-terminal domain"/>
    <property type="match status" value="1"/>
</dbReference>
<dbReference type="HAMAP" id="MF_01602">
    <property type="entry name" value="LplA"/>
    <property type="match status" value="1"/>
</dbReference>
<dbReference type="InterPro" id="IPR045864">
    <property type="entry name" value="aa-tRNA-synth_II/BPL/LPL"/>
</dbReference>
<dbReference type="InterPro" id="IPR004143">
    <property type="entry name" value="BPL_LPL_catalytic"/>
</dbReference>
<dbReference type="InterPro" id="IPR023741">
    <property type="entry name" value="Lipoate_ligase_A"/>
</dbReference>
<dbReference type="InterPro" id="IPR019491">
    <property type="entry name" value="Lipoate_protein_ligase_C"/>
</dbReference>
<dbReference type="InterPro" id="IPR004562">
    <property type="entry name" value="LipoylTrfase_LipoateP_Ligase"/>
</dbReference>
<dbReference type="NCBIfam" id="TIGR00545">
    <property type="entry name" value="lipoyltrans"/>
    <property type="match status" value="1"/>
</dbReference>
<dbReference type="PANTHER" id="PTHR12561">
    <property type="entry name" value="LIPOATE-PROTEIN LIGASE"/>
    <property type="match status" value="1"/>
</dbReference>
<dbReference type="PANTHER" id="PTHR12561:SF3">
    <property type="entry name" value="LIPOYLTRANSFERASE 1, MITOCHONDRIAL"/>
    <property type="match status" value="1"/>
</dbReference>
<dbReference type="Pfam" id="PF10437">
    <property type="entry name" value="Lip_prot_lig_C"/>
    <property type="match status" value="1"/>
</dbReference>
<dbReference type="Pfam" id="PF21948">
    <property type="entry name" value="LplA-B_cat"/>
    <property type="match status" value="1"/>
</dbReference>
<dbReference type="SUPFAM" id="SSF55681">
    <property type="entry name" value="Class II aaRS and biotin synthetases"/>
    <property type="match status" value="1"/>
</dbReference>
<dbReference type="SUPFAM" id="SSF82649">
    <property type="entry name" value="SufE/NifU"/>
    <property type="match status" value="1"/>
</dbReference>
<dbReference type="PROSITE" id="PS51733">
    <property type="entry name" value="BPL_LPL_CATALYTIC"/>
    <property type="match status" value="1"/>
</dbReference>